<accession>P83585</accession>
<dbReference type="SMR" id="P83585"/>
<dbReference type="GO" id="GO:0009507">
    <property type="term" value="C:chloroplast"/>
    <property type="evidence" value="ECO:0000304"/>
    <property type="project" value="UniProtKB"/>
</dbReference>
<dbReference type="GO" id="GO:0009570">
    <property type="term" value="C:chloroplast stroma"/>
    <property type="evidence" value="ECO:0007669"/>
    <property type="project" value="TreeGrafter"/>
</dbReference>
<dbReference type="GO" id="GO:0051537">
    <property type="term" value="F:2 iron, 2 sulfur cluster binding"/>
    <property type="evidence" value="ECO:0007669"/>
    <property type="project" value="UniProtKB-KW"/>
</dbReference>
<dbReference type="GO" id="GO:0009055">
    <property type="term" value="F:electron transfer activity"/>
    <property type="evidence" value="ECO:0000304"/>
    <property type="project" value="UniProtKB"/>
</dbReference>
<dbReference type="GO" id="GO:0008198">
    <property type="term" value="F:ferrous iron binding"/>
    <property type="evidence" value="ECO:0000303"/>
    <property type="project" value="UniProtKB"/>
</dbReference>
<dbReference type="GO" id="GO:0022900">
    <property type="term" value="P:electron transport chain"/>
    <property type="evidence" value="ECO:0007669"/>
    <property type="project" value="InterPro"/>
</dbReference>
<dbReference type="GO" id="GO:0006124">
    <property type="term" value="P:ferredoxin metabolic process"/>
    <property type="evidence" value="ECO:0000304"/>
    <property type="project" value="UniProtKB"/>
</dbReference>
<dbReference type="CDD" id="cd00207">
    <property type="entry name" value="fer2"/>
    <property type="match status" value="1"/>
</dbReference>
<dbReference type="FunFam" id="3.10.20.30:FF:000014">
    <property type="entry name" value="Ferredoxin"/>
    <property type="match status" value="1"/>
</dbReference>
<dbReference type="Gene3D" id="3.10.20.30">
    <property type="match status" value="1"/>
</dbReference>
<dbReference type="InterPro" id="IPR036010">
    <property type="entry name" value="2Fe-2S_ferredoxin-like_sf"/>
</dbReference>
<dbReference type="InterPro" id="IPR001041">
    <property type="entry name" value="2Fe-2S_ferredoxin-type"/>
</dbReference>
<dbReference type="InterPro" id="IPR006058">
    <property type="entry name" value="2Fe2S_fd_BS"/>
</dbReference>
<dbReference type="InterPro" id="IPR012675">
    <property type="entry name" value="Beta-grasp_dom_sf"/>
</dbReference>
<dbReference type="InterPro" id="IPR010241">
    <property type="entry name" value="Fd_pln"/>
</dbReference>
<dbReference type="NCBIfam" id="TIGR02008">
    <property type="entry name" value="fdx_plant"/>
    <property type="match status" value="1"/>
</dbReference>
<dbReference type="PANTHER" id="PTHR43112">
    <property type="entry name" value="FERREDOXIN"/>
    <property type="match status" value="1"/>
</dbReference>
<dbReference type="PANTHER" id="PTHR43112:SF3">
    <property type="entry name" value="FERREDOXIN-2, CHLOROPLASTIC"/>
    <property type="match status" value="1"/>
</dbReference>
<dbReference type="Pfam" id="PF00111">
    <property type="entry name" value="Fer2"/>
    <property type="match status" value="1"/>
</dbReference>
<dbReference type="SUPFAM" id="SSF54292">
    <property type="entry name" value="2Fe-2S ferredoxin-like"/>
    <property type="match status" value="1"/>
</dbReference>
<dbReference type="PROSITE" id="PS00197">
    <property type="entry name" value="2FE2S_FER_1"/>
    <property type="match status" value="1"/>
</dbReference>
<dbReference type="PROSITE" id="PS51085">
    <property type="entry name" value="2FE2S_FER_2"/>
    <property type="match status" value="1"/>
</dbReference>
<sequence length="97" mass="10464">ATYKVKLVTPDGPVEFECPDDEYILDRAEEEGHDLPYSCRAGSCSSCAGKIAAGSVDQSDGNFLDDDQIADGFVLTCVAYPQSDVTIETHKEEELTA</sequence>
<organism evidence="3">
    <name type="scientific">Solanum abutiloides</name>
    <name type="common">Cyphomandra abutiloides</name>
    <dbReference type="NCBI Taxonomy" id="45831"/>
    <lineage>
        <taxon>Eukaryota</taxon>
        <taxon>Viridiplantae</taxon>
        <taxon>Streptophyta</taxon>
        <taxon>Embryophyta</taxon>
        <taxon>Tracheophyta</taxon>
        <taxon>Spermatophyta</taxon>
        <taxon>Magnoliopsida</taxon>
        <taxon>eudicotyledons</taxon>
        <taxon>Gunneridae</taxon>
        <taxon>Pentapetalae</taxon>
        <taxon>asterids</taxon>
        <taxon>lamiids</taxon>
        <taxon>Solanales</taxon>
        <taxon>Solanaceae</taxon>
        <taxon>Solanoideae</taxon>
        <taxon>Solaneae</taxon>
        <taxon>Solanum</taxon>
    </lineage>
</organism>
<keyword id="KW-0001">2Fe-2S</keyword>
<keyword id="KW-0150">Chloroplast</keyword>
<keyword id="KW-0903">Direct protein sequencing</keyword>
<keyword id="KW-0249">Electron transport</keyword>
<keyword id="KW-0408">Iron</keyword>
<keyword id="KW-0411">Iron-sulfur</keyword>
<keyword id="KW-0479">Metal-binding</keyword>
<keyword id="KW-0934">Plastid</keyword>
<keyword id="KW-0813">Transport</keyword>
<feature type="chain" id="PRO_0000189365" description="Ferredoxin">
    <location>
        <begin position="1"/>
        <end position="97"/>
    </location>
</feature>
<feature type="domain" description="2Fe-2S ferredoxin-type" evidence="1">
    <location>
        <begin position="3"/>
        <end position="93"/>
    </location>
</feature>
<feature type="binding site" evidence="1">
    <location>
        <position position="39"/>
    </location>
    <ligand>
        <name>[2Fe-2S] cluster</name>
        <dbReference type="ChEBI" id="CHEBI:190135"/>
    </ligand>
</feature>
<feature type="binding site" evidence="1">
    <location>
        <position position="44"/>
    </location>
    <ligand>
        <name>[2Fe-2S] cluster</name>
        <dbReference type="ChEBI" id="CHEBI:190135"/>
    </ligand>
</feature>
<feature type="binding site" evidence="1">
    <location>
        <position position="47"/>
    </location>
    <ligand>
        <name>[2Fe-2S] cluster</name>
        <dbReference type="ChEBI" id="CHEBI:190135"/>
    </ligand>
</feature>
<feature type="binding site" evidence="1">
    <location>
        <position position="77"/>
    </location>
    <ligand>
        <name>[2Fe-2S] cluster</name>
        <dbReference type="ChEBI" id="CHEBI:190135"/>
    </ligand>
</feature>
<protein>
    <recommendedName>
        <fullName>Ferredoxin</fullName>
    </recommendedName>
</protein>
<reference evidence="3" key="1">
    <citation type="journal article" date="2003" name="Phytochemistry">
        <title>Large differences in amino acid sequences among ferredoxins from several species of genus Solanum.</title>
        <authorList>
            <person name="Mino Y."/>
            <person name="Hazama T."/>
            <person name="Machida Y."/>
        </authorList>
    </citation>
    <scope>PROTEIN SEQUENCE</scope>
    <scope>FUNCTION</scope>
    <scope>COFACTOR</scope>
    <scope>SUBCELLULAR LOCATION</scope>
    <source>
        <tissue evidence="2">Leaf</tissue>
    </source>
</reference>
<comment type="function">
    <text evidence="2">Ferredoxins are iron-sulfur proteins that transfer electrons in a wide variety of metabolic reactions.</text>
</comment>
<comment type="cofactor">
    <cofactor evidence="2">
        <name>[2Fe-2S] cluster</name>
        <dbReference type="ChEBI" id="CHEBI:190135"/>
    </cofactor>
    <text evidence="2">Binds 1 [2Fe-2S] cluster.</text>
</comment>
<comment type="subcellular location">
    <subcellularLocation>
        <location evidence="2">Plastid</location>
        <location evidence="2">Chloroplast</location>
    </subcellularLocation>
</comment>
<comment type="similarity">
    <text evidence="3">Belongs to the 2Fe2S plant-type ferredoxin family.</text>
</comment>
<name>FER_SOLAB</name>
<proteinExistence type="evidence at protein level"/>
<evidence type="ECO:0000255" key="1">
    <source>
        <dbReference type="PROSITE-ProRule" id="PRU00465"/>
    </source>
</evidence>
<evidence type="ECO:0000269" key="2">
    <source>
    </source>
</evidence>
<evidence type="ECO:0000305" key="3"/>